<reference key="1">
    <citation type="journal article" date="2000" name="Eur. J. Biochem.">
        <title>The RadA protein from a hyperthermophilic archaeon Pyrobaculum islandicum is a DNA-dependent ATPase that exhibits two disparate catalytic modes, with a transition temperature at 75 degrees C.</title>
        <authorList>
            <person name="Spies M."/>
            <person name="Kil Y."/>
            <person name="Masui R."/>
            <person name="Kato R."/>
            <person name="Kujo C."/>
            <person name="Ohshima T."/>
            <person name="Kuramitsu S."/>
            <person name="Lanzov V."/>
        </authorList>
    </citation>
    <scope>NUCLEOTIDE SEQUENCE [GENOMIC DNA]</scope>
</reference>
<reference key="2">
    <citation type="submission" date="2006-12" db="EMBL/GenBank/DDBJ databases">
        <title>Complete sequence of Pyrobaculum islandicum DSM 4184.</title>
        <authorList>
            <person name="Copeland A."/>
            <person name="Lucas S."/>
            <person name="Lapidus A."/>
            <person name="Barry K."/>
            <person name="Detter J.C."/>
            <person name="Glavina del Rio T."/>
            <person name="Dalin E."/>
            <person name="Tice H."/>
            <person name="Pitluck S."/>
            <person name="Meincke L."/>
            <person name="Brettin T."/>
            <person name="Bruce D."/>
            <person name="Han C."/>
            <person name="Tapia R."/>
            <person name="Gilna P."/>
            <person name="Schmutz J."/>
            <person name="Larimer F."/>
            <person name="Land M."/>
            <person name="Hauser L."/>
            <person name="Kyrpides N."/>
            <person name="Mikhailova N."/>
            <person name="Cozen A.E."/>
            <person name="Fitz-Gibbon S.T."/>
            <person name="House C.H."/>
            <person name="Saltikov C."/>
            <person name="Lowe T."/>
            <person name="Richardson P."/>
        </authorList>
    </citation>
    <scope>NUCLEOTIDE SEQUENCE [LARGE SCALE GENOMIC DNA]</scope>
    <source>
        <strain>DSM 4184 / JCM 9189 / GEO3</strain>
    </source>
</reference>
<keyword id="KW-0067">ATP-binding</keyword>
<keyword id="KW-0227">DNA damage</keyword>
<keyword id="KW-0233">DNA recombination</keyword>
<keyword id="KW-0238">DNA-binding</keyword>
<keyword id="KW-0547">Nucleotide-binding</keyword>
<name>RADA_PYRIL</name>
<protein>
    <recommendedName>
        <fullName>DNA repair and recombination protein RadA</fullName>
    </recommendedName>
</protein>
<sequence>MSSKKRKDAEVAQARVEITPDLDVEELEGVGRVTGAKLKERGFFTVRDVAFASVKELAEIVGNEERAQQIVEAARKMLGLHSFVSALEVYERRKKIRRISTGVRALDELLGGGIETRAVTEVAGEFGSGKTQLCHQLAVMVQLPEERGGLGAKAIYIDTENTFRPERIMQIAKARGLDPDQALNNIFYARAYSSDHQMILVDQAKSIIRQHNVALLIVDSVIAHFRSEFPGRENLAERQQKLNKHVADLLRLADAYDVAVVITNQVMAQPDVFFGNPLRPAGGNILAHGATYRLWLRKSKENIRIAKIFDSPYHPEGEVSFRITEEGLVD</sequence>
<organism>
    <name type="scientific">Pyrobaculum islandicum (strain DSM 4184 / JCM 9189 / GEO3)</name>
    <dbReference type="NCBI Taxonomy" id="384616"/>
    <lineage>
        <taxon>Archaea</taxon>
        <taxon>Thermoproteota</taxon>
        <taxon>Thermoprotei</taxon>
        <taxon>Thermoproteales</taxon>
        <taxon>Thermoproteaceae</taxon>
        <taxon>Pyrobaculum</taxon>
    </lineage>
</organism>
<evidence type="ECO:0000255" key="1"/>
<evidence type="ECO:0000305" key="2"/>
<gene>
    <name type="primary">radA</name>
    <name type="ordered locus">Pisl_0713</name>
</gene>
<dbReference type="EMBL" id="AB026115">
    <property type="protein sequence ID" value="BAA88984.1"/>
    <property type="status" value="ALT_INIT"/>
    <property type="molecule type" value="Genomic_DNA"/>
</dbReference>
<dbReference type="EMBL" id="CP000504">
    <property type="protein sequence ID" value="ABL87891.1"/>
    <property type="molecule type" value="Genomic_DNA"/>
</dbReference>
<dbReference type="RefSeq" id="WP_011762467.1">
    <property type="nucleotide sequence ID" value="NC_008701.1"/>
</dbReference>
<dbReference type="SMR" id="Q9UWR5"/>
<dbReference type="STRING" id="384616.Pisl_0713"/>
<dbReference type="GeneID" id="4617625"/>
<dbReference type="KEGG" id="pis:Pisl_0713"/>
<dbReference type="eggNOG" id="arCOG00415">
    <property type="taxonomic scope" value="Archaea"/>
</dbReference>
<dbReference type="HOGENOM" id="CLU_041732_0_0_2"/>
<dbReference type="OrthoDB" id="31129at2157"/>
<dbReference type="BRENDA" id="3.6.4.B7">
    <property type="organism ID" value="5240"/>
</dbReference>
<dbReference type="Proteomes" id="UP000002595">
    <property type="component" value="Chromosome"/>
</dbReference>
<dbReference type="GO" id="GO:0005524">
    <property type="term" value="F:ATP binding"/>
    <property type="evidence" value="ECO:0007669"/>
    <property type="project" value="UniProtKB-UniRule"/>
</dbReference>
<dbReference type="GO" id="GO:0016887">
    <property type="term" value="F:ATP hydrolysis activity"/>
    <property type="evidence" value="ECO:0007669"/>
    <property type="project" value="InterPro"/>
</dbReference>
<dbReference type="GO" id="GO:0140664">
    <property type="term" value="F:ATP-dependent DNA damage sensor activity"/>
    <property type="evidence" value="ECO:0007669"/>
    <property type="project" value="InterPro"/>
</dbReference>
<dbReference type="GO" id="GO:0003684">
    <property type="term" value="F:damaged DNA binding"/>
    <property type="evidence" value="ECO:0007669"/>
    <property type="project" value="UniProtKB-UniRule"/>
</dbReference>
<dbReference type="GO" id="GO:0006310">
    <property type="term" value="P:DNA recombination"/>
    <property type="evidence" value="ECO:0007669"/>
    <property type="project" value="UniProtKB-UniRule"/>
</dbReference>
<dbReference type="GO" id="GO:0006281">
    <property type="term" value="P:DNA repair"/>
    <property type="evidence" value="ECO:0007669"/>
    <property type="project" value="UniProtKB-UniRule"/>
</dbReference>
<dbReference type="CDD" id="cd19515">
    <property type="entry name" value="archRadA"/>
    <property type="match status" value="1"/>
</dbReference>
<dbReference type="FunFam" id="3.40.50.300:FF:002052">
    <property type="entry name" value="DNA repair protein RAD51 homolog"/>
    <property type="match status" value="1"/>
</dbReference>
<dbReference type="Gene3D" id="1.10.150.20">
    <property type="entry name" value="5' to 3' exonuclease, C-terminal subdomain"/>
    <property type="match status" value="1"/>
</dbReference>
<dbReference type="Gene3D" id="3.40.50.300">
    <property type="entry name" value="P-loop containing nucleotide triphosphate hydrolases"/>
    <property type="match status" value="1"/>
</dbReference>
<dbReference type="HAMAP" id="MF_00348">
    <property type="entry name" value="RadA_arch"/>
    <property type="match status" value="1"/>
</dbReference>
<dbReference type="InterPro" id="IPR003593">
    <property type="entry name" value="AAA+_ATPase"/>
</dbReference>
<dbReference type="InterPro" id="IPR013632">
    <property type="entry name" value="DNA_recomb/repair_Rad51_C"/>
</dbReference>
<dbReference type="InterPro" id="IPR011938">
    <property type="entry name" value="DNA_recomb/repair_RadA"/>
</dbReference>
<dbReference type="InterPro" id="IPR016467">
    <property type="entry name" value="DNA_recomb/repair_RecA-like"/>
</dbReference>
<dbReference type="InterPro" id="IPR010995">
    <property type="entry name" value="DNA_repair_Rad51/TF_NusA_a-hlx"/>
</dbReference>
<dbReference type="InterPro" id="IPR027417">
    <property type="entry name" value="P-loop_NTPase"/>
</dbReference>
<dbReference type="InterPro" id="IPR020588">
    <property type="entry name" value="RecA_ATP-bd"/>
</dbReference>
<dbReference type="InterPro" id="IPR020587">
    <property type="entry name" value="RecA_monomer-monomer_interface"/>
</dbReference>
<dbReference type="NCBIfam" id="NF003301">
    <property type="entry name" value="PRK04301.1"/>
    <property type="match status" value="1"/>
</dbReference>
<dbReference type="NCBIfam" id="TIGR02236">
    <property type="entry name" value="recomb_radA"/>
    <property type="match status" value="1"/>
</dbReference>
<dbReference type="PANTHER" id="PTHR22942:SF30">
    <property type="entry name" value="MEIOTIC RECOMBINATION PROTEIN DMC1_LIM15 HOMOLOG"/>
    <property type="match status" value="1"/>
</dbReference>
<dbReference type="PANTHER" id="PTHR22942">
    <property type="entry name" value="RECA/RAD51/RADA DNA STRAND-PAIRING FAMILY MEMBER"/>
    <property type="match status" value="1"/>
</dbReference>
<dbReference type="Pfam" id="PF14520">
    <property type="entry name" value="HHH_5"/>
    <property type="match status" value="1"/>
</dbReference>
<dbReference type="Pfam" id="PF08423">
    <property type="entry name" value="Rad51"/>
    <property type="match status" value="1"/>
</dbReference>
<dbReference type="PIRSF" id="PIRSF005856">
    <property type="entry name" value="Rad51"/>
    <property type="match status" value="1"/>
</dbReference>
<dbReference type="SMART" id="SM00382">
    <property type="entry name" value="AAA"/>
    <property type="match status" value="1"/>
</dbReference>
<dbReference type="SUPFAM" id="SSF52540">
    <property type="entry name" value="P-loop containing nucleoside triphosphate hydrolases"/>
    <property type="match status" value="1"/>
</dbReference>
<dbReference type="SUPFAM" id="SSF47794">
    <property type="entry name" value="Rad51 N-terminal domain-like"/>
    <property type="match status" value="1"/>
</dbReference>
<dbReference type="PROSITE" id="PS50162">
    <property type="entry name" value="RECA_2"/>
    <property type="match status" value="1"/>
</dbReference>
<dbReference type="PROSITE" id="PS50163">
    <property type="entry name" value="RECA_3"/>
    <property type="match status" value="1"/>
</dbReference>
<accession>Q9UWR5</accession>
<accession>A1RSF9</accession>
<feature type="chain" id="PRO_0000150105" description="DNA repair and recombination protein RadA">
    <location>
        <begin position="1"/>
        <end position="330"/>
    </location>
</feature>
<feature type="binding site" evidence="1">
    <location>
        <begin position="124"/>
        <end position="131"/>
    </location>
    <ligand>
        <name>ATP</name>
        <dbReference type="ChEBI" id="CHEBI:30616"/>
    </ligand>
</feature>
<feature type="sequence conflict" description="In Ref. 1; BAA88984." evidence="2" ref="1">
    <original>P</original>
    <variation>A</variation>
    <location>
        <position position="144"/>
    </location>
</feature>
<proteinExistence type="inferred from homology"/>
<comment type="function">
    <text>Involved in DNA repair and in homologous recombination. Binds and assemble on single-stranded DNA to form a nucleoprotein filament. Hydrolyzes ATP in a ssDNA-dependent manner and promotes DNA strand exchange between homologous DNA molecules.</text>
</comment>
<comment type="similarity">
    <text evidence="2">Belongs to the eukaryotic RecA-like protein family.</text>
</comment>
<comment type="sequence caution" evidence="2">
    <conflict type="erroneous initiation">
        <sequence resource="EMBL-CDS" id="BAA88984"/>
    </conflict>
</comment>